<feature type="chain" id="PRO_0000290618" description="CCR4-Not complex 3'-5'-exoribonuclease subunit Ccr4">
    <location>
        <begin position="1"/>
        <end position="670"/>
    </location>
</feature>
<feature type="repeat" description="LRR 1">
    <location>
        <begin position="165"/>
        <end position="186"/>
    </location>
</feature>
<feature type="repeat" description="LRR 2">
    <location>
        <begin position="188"/>
        <end position="209"/>
    </location>
</feature>
<feature type="repeat" description="LRR 3">
    <location>
        <begin position="211"/>
        <end position="232"/>
    </location>
</feature>
<feature type="repeat" description="LRR 4">
    <location>
        <begin position="234"/>
        <end position="253"/>
    </location>
</feature>
<feature type="region of interest" description="Disordered" evidence="4">
    <location>
        <begin position="1"/>
        <end position="39"/>
    </location>
</feature>
<feature type="region of interest" description="Disordered" evidence="4">
    <location>
        <begin position="103"/>
        <end position="137"/>
    </location>
</feature>
<feature type="region of interest" description="Disordered" evidence="4">
    <location>
        <begin position="644"/>
        <end position="670"/>
    </location>
</feature>
<feature type="compositionally biased region" description="Low complexity" evidence="4">
    <location>
        <begin position="9"/>
        <end position="39"/>
    </location>
</feature>
<feature type="compositionally biased region" description="Polar residues" evidence="4">
    <location>
        <begin position="123"/>
        <end position="136"/>
    </location>
</feature>
<feature type="compositionally biased region" description="Polar residues" evidence="4">
    <location>
        <begin position="646"/>
        <end position="670"/>
    </location>
</feature>
<feature type="binding site" evidence="2">
    <location>
        <position position="355"/>
    </location>
    <ligand>
        <name>Mg(2+)</name>
        <dbReference type="ChEBI" id="CHEBI:18420"/>
    </ligand>
</feature>
<protein>
    <recommendedName>
        <fullName evidence="5">CCR4-Not complex 3'-5'-exoribonuclease subunit Ccr4</fullName>
        <ecNumber>3.1.13.4</ecNumber>
    </recommendedName>
    <alternativeName>
        <fullName>Carbon catabolite repressor protein 4</fullName>
    </alternativeName>
    <alternativeName>
        <fullName>Cytoplasmic deadenylase</fullName>
    </alternativeName>
    <alternativeName>
        <fullName>Glucose-repressible alcohol dehydrogenase transcriptional effector</fullName>
    </alternativeName>
</protein>
<proteinExistence type="inferred from homology"/>
<name>CCR4_MYCMD</name>
<accession>Q4P9T3</accession>
<accession>A0A0D1C4M7</accession>
<organism>
    <name type="scientific">Mycosarcoma maydis</name>
    <name type="common">Corn smut fungus</name>
    <name type="synonym">Ustilago maydis</name>
    <dbReference type="NCBI Taxonomy" id="5270"/>
    <lineage>
        <taxon>Eukaryota</taxon>
        <taxon>Fungi</taxon>
        <taxon>Dikarya</taxon>
        <taxon>Basidiomycota</taxon>
        <taxon>Ustilaginomycotina</taxon>
        <taxon>Ustilaginomycetes</taxon>
        <taxon>Ustilaginales</taxon>
        <taxon>Ustilaginaceae</taxon>
        <taxon>Mycosarcoma</taxon>
    </lineage>
</organism>
<evidence type="ECO:0000250" key="1"/>
<evidence type="ECO:0000250" key="2">
    <source>
        <dbReference type="UniProtKB" id="O95551"/>
    </source>
</evidence>
<evidence type="ECO:0000250" key="3">
    <source>
        <dbReference type="UniProtKB" id="P31384"/>
    </source>
</evidence>
<evidence type="ECO:0000256" key="4">
    <source>
        <dbReference type="SAM" id="MobiDB-lite"/>
    </source>
</evidence>
<evidence type="ECO:0000305" key="5"/>
<comment type="function">
    <text evidence="3">Acts as a catalytic component of the CCR4-NOT core complex, which in the nucleus seems to be a general transcription factor, and in the cytoplasm the major mRNA deadenylase involved in mRNA turnover (By similarity). Ccr4 has 3'-5' RNase activity with a strong preference for polyadenylated substrates and also low exonuclease activity towards single-stranded DNA (By similarity).</text>
</comment>
<comment type="catalytic activity">
    <reaction>
        <text>Exonucleolytic cleavage of poly(A) to 5'-AMP.</text>
        <dbReference type="EC" id="3.1.13.4"/>
    </reaction>
</comment>
<comment type="cofactor">
    <cofactor evidence="1">
        <name>Mg(2+)</name>
        <dbReference type="ChEBI" id="CHEBI:18420"/>
    </cofactor>
</comment>
<comment type="subcellular location">
    <subcellularLocation>
        <location evidence="1">Cytoplasm</location>
    </subcellularLocation>
    <subcellularLocation>
        <location evidence="1">Nucleus</location>
    </subcellularLocation>
</comment>
<comment type="similarity">
    <text evidence="5">Belongs to the CCR4/nocturin family.</text>
</comment>
<comment type="sequence caution" evidence="5">
    <conflict type="erroneous initiation">
        <sequence resource="EMBL-CDS" id="KIS68557"/>
    </conflict>
    <text>Extended N-terminus.</text>
</comment>
<keyword id="KW-0010">Activator</keyword>
<keyword id="KW-0963">Cytoplasm</keyword>
<keyword id="KW-0269">Exonuclease</keyword>
<keyword id="KW-0378">Hydrolase</keyword>
<keyword id="KW-0433">Leucine-rich repeat</keyword>
<keyword id="KW-0460">Magnesium</keyword>
<keyword id="KW-0479">Metal-binding</keyword>
<keyword id="KW-0540">Nuclease</keyword>
<keyword id="KW-0539">Nucleus</keyword>
<keyword id="KW-1185">Reference proteome</keyword>
<keyword id="KW-0677">Repeat</keyword>
<keyword id="KW-0678">Repressor</keyword>
<keyword id="KW-0694">RNA-binding</keyword>
<keyword id="KW-0804">Transcription</keyword>
<keyword id="KW-0805">Transcription regulation</keyword>
<sequence length="670" mass="73392">MSSPGGLHSAHLSSSASRSEAVANAANAAAAAAAAASGSPHWQQQIVKAEISRQSNSPHHHARAAALAARSATSSAIAIQDPSKGIVTPQVAANGLFVAKKDSSAANGGGADDGKGSGADTAPATTNGAAPISSTSAKDKQTWSTIDMGGLALKNIANEVYRYSFLTSLFINHNALTTLSSDIVKLRHLTVLDASGNKLSSVPPELGMLTSLRELFLFDNNLATLPPELGTLHQLEMLGVEGNPLQDNLRSLLQREGTTAVIAYLRDSCPVPLPPPEREWIMIDPDLPDLDADKHANDATQESFNVLSYNILFDRYATAQMYGYTPSWALAWDYRKEFILQEVMSYSADICCLQEVGVEQYEDYFLHHLSQQDYEGVFYPKSRARTMRDDERRRVDGCAIFYKSNKYQLIEKQLVEFNQIALQRPDFKKSEDMYNRVMTKDNIAVIALLENKLSGSRIVVANVHTHWDPAFRDVKLVQVAMLMDEVEKAGARFAKLPPKPSVAEGYPPPPKYTHANQIPTIICGDFNSVPETGVYDFLANGAVPGDHEDFMDHVYGNYTAQGLQHSYKLESSYVPIGELPFTNYTPGYEGAIDYIFYTKNTLSVTGVLGEIDKQYLSKVVGFPNAHFPSDHICIMSEFNVKRSDRGSSSTTAREVHHPTSSSNASSMPRR</sequence>
<reference key="1">
    <citation type="journal article" date="2006" name="Nature">
        <title>Insights from the genome of the biotrophic fungal plant pathogen Ustilago maydis.</title>
        <authorList>
            <person name="Kaemper J."/>
            <person name="Kahmann R."/>
            <person name="Boelker M."/>
            <person name="Ma L.-J."/>
            <person name="Brefort T."/>
            <person name="Saville B.J."/>
            <person name="Banuett F."/>
            <person name="Kronstad J.W."/>
            <person name="Gold S.E."/>
            <person name="Mueller O."/>
            <person name="Perlin M.H."/>
            <person name="Woesten H.A.B."/>
            <person name="de Vries R."/>
            <person name="Ruiz-Herrera J."/>
            <person name="Reynaga-Pena C.G."/>
            <person name="Snetselaar K."/>
            <person name="McCann M."/>
            <person name="Perez-Martin J."/>
            <person name="Feldbruegge M."/>
            <person name="Basse C.W."/>
            <person name="Steinberg G."/>
            <person name="Ibeas J.I."/>
            <person name="Holloman W."/>
            <person name="Guzman P."/>
            <person name="Farman M.L."/>
            <person name="Stajich J.E."/>
            <person name="Sentandreu R."/>
            <person name="Gonzalez-Prieto J.M."/>
            <person name="Kennell J.C."/>
            <person name="Molina L."/>
            <person name="Schirawski J."/>
            <person name="Mendoza-Mendoza A."/>
            <person name="Greilinger D."/>
            <person name="Muench K."/>
            <person name="Roessel N."/>
            <person name="Scherer M."/>
            <person name="Vranes M."/>
            <person name="Ladendorf O."/>
            <person name="Vincon V."/>
            <person name="Fuchs U."/>
            <person name="Sandrock B."/>
            <person name="Meng S."/>
            <person name="Ho E.C.H."/>
            <person name="Cahill M.J."/>
            <person name="Boyce K.J."/>
            <person name="Klose J."/>
            <person name="Klosterman S.J."/>
            <person name="Deelstra H.J."/>
            <person name="Ortiz-Castellanos L."/>
            <person name="Li W."/>
            <person name="Sanchez-Alonso P."/>
            <person name="Schreier P.H."/>
            <person name="Haeuser-Hahn I."/>
            <person name="Vaupel M."/>
            <person name="Koopmann E."/>
            <person name="Friedrich G."/>
            <person name="Voss H."/>
            <person name="Schlueter T."/>
            <person name="Margolis J."/>
            <person name="Platt D."/>
            <person name="Swimmer C."/>
            <person name="Gnirke A."/>
            <person name="Chen F."/>
            <person name="Vysotskaia V."/>
            <person name="Mannhaupt G."/>
            <person name="Gueldener U."/>
            <person name="Muensterkoetter M."/>
            <person name="Haase D."/>
            <person name="Oesterheld M."/>
            <person name="Mewes H.-W."/>
            <person name="Mauceli E.W."/>
            <person name="DeCaprio D."/>
            <person name="Wade C.M."/>
            <person name="Butler J."/>
            <person name="Young S.K."/>
            <person name="Jaffe D.B."/>
            <person name="Calvo S.E."/>
            <person name="Nusbaum C."/>
            <person name="Galagan J.E."/>
            <person name="Birren B.W."/>
        </authorList>
    </citation>
    <scope>NUCLEOTIDE SEQUENCE [LARGE SCALE GENOMIC DNA]</scope>
    <source>
        <strain>DSM 14603 / FGSC 9021 / UM521</strain>
    </source>
</reference>
<reference key="2">
    <citation type="submission" date="2014-09" db="EMBL/GenBank/DDBJ databases">
        <authorList>
            <person name="Gueldener U."/>
            <person name="Muensterkoetter M."/>
            <person name="Walter M.C."/>
            <person name="Mannhaupt G."/>
            <person name="Kahmann R."/>
        </authorList>
    </citation>
    <scope>GENOME REANNOTATION</scope>
    <source>
        <strain>DSM 14603 / FGSC 9021 / UM521</strain>
    </source>
</reference>
<dbReference type="EC" id="3.1.13.4"/>
<dbReference type="EMBL" id="CM003147">
    <property type="protein sequence ID" value="KIS68557.1"/>
    <property type="status" value="ALT_INIT"/>
    <property type="molecule type" value="Genomic_DNA"/>
</dbReference>
<dbReference type="RefSeq" id="XP_011389768.1">
    <property type="nucleotide sequence ID" value="XM_011391466.1"/>
</dbReference>
<dbReference type="SMR" id="Q4P9T3"/>
<dbReference type="FunCoup" id="Q4P9T3">
    <property type="interactions" value="418"/>
</dbReference>
<dbReference type="STRING" id="237631.Q4P9T3"/>
<dbReference type="EnsemblFungi" id="KIS68557">
    <property type="protein sequence ID" value="KIS68557"/>
    <property type="gene ID" value="UMAG_10379"/>
</dbReference>
<dbReference type="GeneID" id="23566422"/>
<dbReference type="KEGG" id="uma:UMAG_10379"/>
<dbReference type="eggNOG" id="KOG0620">
    <property type="taxonomic scope" value="Eukaryota"/>
</dbReference>
<dbReference type="HOGENOM" id="CLU_016428_4_0_1"/>
<dbReference type="InParanoid" id="Q4P9T3"/>
<dbReference type="OMA" id="PHYYARA"/>
<dbReference type="OrthoDB" id="428734at2759"/>
<dbReference type="Proteomes" id="UP000000561">
    <property type="component" value="Chromosome 8"/>
</dbReference>
<dbReference type="GO" id="GO:0030015">
    <property type="term" value="C:CCR4-NOT core complex"/>
    <property type="evidence" value="ECO:0007669"/>
    <property type="project" value="EnsemblFungi"/>
</dbReference>
<dbReference type="GO" id="GO:0016593">
    <property type="term" value="C:Cdc73/Paf1 complex"/>
    <property type="evidence" value="ECO:0007669"/>
    <property type="project" value="EnsemblFungi"/>
</dbReference>
<dbReference type="GO" id="GO:0000932">
    <property type="term" value="C:P-body"/>
    <property type="evidence" value="ECO:0007669"/>
    <property type="project" value="EnsemblFungi"/>
</dbReference>
<dbReference type="GO" id="GO:0000175">
    <property type="term" value="F:3'-5'-RNA exonuclease activity"/>
    <property type="evidence" value="ECO:0000318"/>
    <property type="project" value="GO_Central"/>
</dbReference>
<dbReference type="GO" id="GO:0046872">
    <property type="term" value="F:metal ion binding"/>
    <property type="evidence" value="ECO:0007669"/>
    <property type="project" value="UniProtKB-KW"/>
</dbReference>
<dbReference type="GO" id="GO:0004535">
    <property type="term" value="F:poly(A)-specific ribonuclease activity"/>
    <property type="evidence" value="ECO:0007669"/>
    <property type="project" value="UniProtKB-EC"/>
</dbReference>
<dbReference type="GO" id="GO:0003723">
    <property type="term" value="F:RNA binding"/>
    <property type="evidence" value="ECO:0007669"/>
    <property type="project" value="UniProtKB-KW"/>
</dbReference>
<dbReference type="GO" id="GO:0006260">
    <property type="term" value="P:DNA replication"/>
    <property type="evidence" value="ECO:0007669"/>
    <property type="project" value="EnsemblFungi"/>
</dbReference>
<dbReference type="GO" id="GO:0000076">
    <property type="term" value="P:DNA replication checkpoint signaling"/>
    <property type="evidence" value="ECO:0007669"/>
    <property type="project" value="EnsemblFungi"/>
</dbReference>
<dbReference type="GO" id="GO:0000289">
    <property type="term" value="P:nuclear-transcribed mRNA poly(A) tail shortening"/>
    <property type="evidence" value="ECO:0007669"/>
    <property type="project" value="EnsemblFungi"/>
</dbReference>
<dbReference type="GO" id="GO:0032968">
    <property type="term" value="P:positive regulation of transcription elongation by RNA polymerase II"/>
    <property type="evidence" value="ECO:0007669"/>
    <property type="project" value="EnsemblFungi"/>
</dbReference>
<dbReference type="GO" id="GO:0006368">
    <property type="term" value="P:transcription elongation by RNA polymerase II"/>
    <property type="evidence" value="ECO:0007669"/>
    <property type="project" value="EnsemblFungi"/>
</dbReference>
<dbReference type="GO" id="GO:0007089">
    <property type="term" value="P:traversing start control point of mitotic cell cycle"/>
    <property type="evidence" value="ECO:0007669"/>
    <property type="project" value="EnsemblFungi"/>
</dbReference>
<dbReference type="CDD" id="cd09097">
    <property type="entry name" value="Deadenylase_CCR4"/>
    <property type="match status" value="1"/>
</dbReference>
<dbReference type="FunFam" id="3.60.10.10:FF:000037">
    <property type="entry name" value="Glucose-repressible alcohol dehydrogenase transcriptional effector"/>
    <property type="match status" value="1"/>
</dbReference>
<dbReference type="FunFam" id="3.80.10.10:FF:000447">
    <property type="entry name" value="Glucose-repressible alcohol dehydrogenase transcriptional effector"/>
    <property type="match status" value="1"/>
</dbReference>
<dbReference type="Gene3D" id="3.60.10.10">
    <property type="entry name" value="Endonuclease/exonuclease/phosphatase"/>
    <property type="match status" value="1"/>
</dbReference>
<dbReference type="Gene3D" id="3.80.10.10">
    <property type="entry name" value="Ribonuclease Inhibitor"/>
    <property type="match status" value="1"/>
</dbReference>
<dbReference type="InterPro" id="IPR050410">
    <property type="entry name" value="CCR4/nocturin_mRNA_transcr"/>
</dbReference>
<dbReference type="InterPro" id="IPR036691">
    <property type="entry name" value="Endo/exonu/phosph_ase_sf"/>
</dbReference>
<dbReference type="InterPro" id="IPR005135">
    <property type="entry name" value="Endo/exonuclease/phosphatase"/>
</dbReference>
<dbReference type="InterPro" id="IPR001611">
    <property type="entry name" value="Leu-rich_rpt"/>
</dbReference>
<dbReference type="InterPro" id="IPR003591">
    <property type="entry name" value="Leu-rich_rpt_typical-subtyp"/>
</dbReference>
<dbReference type="InterPro" id="IPR032675">
    <property type="entry name" value="LRR_dom_sf"/>
</dbReference>
<dbReference type="PANTHER" id="PTHR12121">
    <property type="entry name" value="CARBON CATABOLITE REPRESSOR PROTEIN 4"/>
    <property type="match status" value="1"/>
</dbReference>
<dbReference type="PANTHER" id="PTHR12121:SF100">
    <property type="entry name" value="POLY(A)-SPECIFIC RIBONUCLEASE"/>
    <property type="match status" value="1"/>
</dbReference>
<dbReference type="Pfam" id="PF03372">
    <property type="entry name" value="Exo_endo_phos"/>
    <property type="match status" value="1"/>
</dbReference>
<dbReference type="Pfam" id="PF13855">
    <property type="entry name" value="LRR_8"/>
    <property type="match status" value="1"/>
</dbReference>
<dbReference type="SMART" id="SM00369">
    <property type="entry name" value="LRR_TYP"/>
    <property type="match status" value="2"/>
</dbReference>
<dbReference type="SUPFAM" id="SSF56219">
    <property type="entry name" value="DNase I-like"/>
    <property type="match status" value="1"/>
</dbReference>
<dbReference type="SUPFAM" id="SSF52058">
    <property type="entry name" value="L domain-like"/>
    <property type="match status" value="1"/>
</dbReference>
<dbReference type="PROSITE" id="PS51450">
    <property type="entry name" value="LRR"/>
    <property type="match status" value="3"/>
</dbReference>
<gene>
    <name type="primary">CCR4</name>
    <name type="ORF">UMAG_10379</name>
</gene>